<name>O10A4_HUMAN</name>
<feature type="chain" id="PRO_0000150686" description="Olfactory receptor 10A4">
    <location>
        <begin position="1"/>
        <end position="315"/>
    </location>
</feature>
<feature type="topological domain" description="Extracellular" evidence="1">
    <location>
        <begin position="1"/>
        <end position="26"/>
    </location>
</feature>
<feature type="transmembrane region" description="Helical; Name=1" evidence="1">
    <location>
        <begin position="27"/>
        <end position="47"/>
    </location>
</feature>
<feature type="topological domain" description="Cytoplasmic" evidence="1">
    <location>
        <begin position="48"/>
        <end position="55"/>
    </location>
</feature>
<feature type="transmembrane region" description="Helical; Name=2" evidence="1">
    <location>
        <begin position="56"/>
        <end position="76"/>
    </location>
</feature>
<feature type="topological domain" description="Extracellular" evidence="1">
    <location>
        <begin position="77"/>
        <end position="100"/>
    </location>
</feature>
<feature type="transmembrane region" description="Helical; Name=3" evidence="1">
    <location>
        <begin position="101"/>
        <end position="121"/>
    </location>
</feature>
<feature type="topological domain" description="Cytoplasmic" evidence="1">
    <location>
        <begin position="122"/>
        <end position="140"/>
    </location>
</feature>
<feature type="transmembrane region" description="Helical; Name=4" evidence="1">
    <location>
        <begin position="141"/>
        <end position="161"/>
    </location>
</feature>
<feature type="topological domain" description="Extracellular" evidence="1">
    <location>
        <begin position="162"/>
        <end position="198"/>
    </location>
</feature>
<feature type="transmembrane region" description="Helical; Name=5" evidence="1">
    <location>
        <begin position="199"/>
        <end position="218"/>
    </location>
</feature>
<feature type="topological domain" description="Cytoplasmic" evidence="1">
    <location>
        <begin position="219"/>
        <end position="238"/>
    </location>
</feature>
<feature type="transmembrane region" description="Helical; Name=6" evidence="1">
    <location>
        <begin position="239"/>
        <end position="259"/>
    </location>
</feature>
<feature type="topological domain" description="Extracellular" evidence="1">
    <location>
        <begin position="260"/>
        <end position="272"/>
    </location>
</feature>
<feature type="transmembrane region" description="Helical; Name=7" evidence="1">
    <location>
        <begin position="273"/>
        <end position="293"/>
    </location>
</feature>
<feature type="topological domain" description="Cytoplasmic" evidence="1">
    <location>
        <begin position="294"/>
        <end position="315"/>
    </location>
</feature>
<feature type="glycosylation site" description="N-linked (GlcNAc...) asparagine" evidence="1">
    <location>
        <position position="5"/>
    </location>
</feature>
<feature type="disulfide bond" evidence="2">
    <location>
        <begin position="98"/>
        <end position="190"/>
    </location>
</feature>
<feature type="sequence variant" id="VAR_060023" description="In dbSNP:rs2595453." evidence="3 4 5">
    <original>L</original>
    <variation>P</variation>
    <location>
        <position position="206"/>
    </location>
</feature>
<feature type="sequence variant" id="VAR_034280" description="In dbSNP:rs7938371.">
    <original>R</original>
    <variation>H</variation>
    <location>
        <position position="221"/>
    </location>
</feature>
<feature type="sequence variant" id="VAR_034281" description="In dbSNP:rs16919049.">
    <original>L</original>
    <variation>F</variation>
    <location>
        <position position="246"/>
    </location>
</feature>
<feature type="sequence variant" id="VAR_024124" description="In dbSNP:rs10839635." evidence="6">
    <original>R</original>
    <variation>Q</variation>
    <location>
        <position position="262"/>
    </location>
</feature>
<comment type="function">
    <text evidence="7">Odorant receptor (Potential). May be involved in taste perception.</text>
</comment>
<comment type="subcellular location">
    <subcellularLocation>
        <location>Cell membrane</location>
        <topology>Multi-pass membrane protein</topology>
    </subcellularLocation>
</comment>
<comment type="tissue specificity">
    <text>Expressed in the tongue.</text>
</comment>
<comment type="similarity">
    <text evidence="2">Belongs to the G-protein coupled receptor 1 family.</text>
</comment>
<comment type="online information" name="Human Olfactory Receptor Data Exploratorium (HORDE)">
    <link uri="http://genome.weizmann.ac.il/horde/card/index/symbol:OR10A4"/>
</comment>
<dbReference type="EMBL" id="AF321237">
    <property type="protein sequence ID" value="AAG45205.1"/>
    <property type="molecule type" value="Genomic_DNA"/>
</dbReference>
<dbReference type="EMBL" id="AF209506">
    <property type="protein sequence ID" value="AAL32993.1"/>
    <property type="molecule type" value="mRNA"/>
</dbReference>
<dbReference type="EMBL" id="AC087280">
    <property type="status" value="NOT_ANNOTATED_CDS"/>
    <property type="molecule type" value="Genomic_DNA"/>
</dbReference>
<dbReference type="EMBL" id="CH471064">
    <property type="protein sequence ID" value="EAW68674.1"/>
    <property type="molecule type" value="Genomic_DNA"/>
</dbReference>
<dbReference type="EMBL" id="BC137024">
    <property type="protein sequence ID" value="AAI37025.1"/>
    <property type="molecule type" value="mRNA"/>
</dbReference>
<dbReference type="EMBL" id="BC137027">
    <property type="protein sequence ID" value="AAI37028.1"/>
    <property type="molecule type" value="mRNA"/>
</dbReference>
<dbReference type="EMBL" id="AF399625">
    <property type="protein sequence ID" value="AAK95110.1"/>
    <property type="molecule type" value="Genomic_DNA"/>
</dbReference>
<dbReference type="CCDS" id="CCDS7774.1"/>
<dbReference type="RefSeq" id="NP_997069.2">
    <property type="nucleotide sequence ID" value="NM_207186.2"/>
</dbReference>
<dbReference type="SMR" id="Q9H209"/>
<dbReference type="BioGRID" id="129519">
    <property type="interactions" value="5"/>
</dbReference>
<dbReference type="FunCoup" id="Q9H209">
    <property type="interactions" value="460"/>
</dbReference>
<dbReference type="IntAct" id="Q9H209">
    <property type="interactions" value="4"/>
</dbReference>
<dbReference type="STRING" id="9606.ENSP00000369157"/>
<dbReference type="GlyCosmos" id="Q9H209">
    <property type="glycosylation" value="1 site, No reported glycans"/>
</dbReference>
<dbReference type="GlyGen" id="Q9H209">
    <property type="glycosylation" value="1 site"/>
</dbReference>
<dbReference type="BioMuta" id="OR10A4"/>
<dbReference type="DMDM" id="296439244"/>
<dbReference type="PaxDb" id="9606-ENSP00000369157"/>
<dbReference type="Antibodypedia" id="54733">
    <property type="antibodies" value="100 antibodies from 19 providers"/>
</dbReference>
<dbReference type="DNASU" id="283297"/>
<dbReference type="Ensembl" id="ENST00000379829.2">
    <property type="protein sequence ID" value="ENSP00000369157.2"/>
    <property type="gene ID" value="ENSG00000170782.3"/>
</dbReference>
<dbReference type="GeneID" id="283297"/>
<dbReference type="KEGG" id="hsa:283297"/>
<dbReference type="MANE-Select" id="ENST00000379829.2">
    <property type="protein sequence ID" value="ENSP00000369157.2"/>
    <property type="RefSeq nucleotide sequence ID" value="NM_207186.2"/>
    <property type="RefSeq protein sequence ID" value="NP_997069.2"/>
</dbReference>
<dbReference type="UCSC" id="uc010rat.2">
    <property type="organism name" value="human"/>
</dbReference>
<dbReference type="AGR" id="HGNC:15130"/>
<dbReference type="CTD" id="283297"/>
<dbReference type="DisGeNET" id="283297"/>
<dbReference type="GeneCards" id="OR10A4"/>
<dbReference type="HGNC" id="HGNC:15130">
    <property type="gene designation" value="OR10A4"/>
</dbReference>
<dbReference type="HPA" id="ENSG00000170782">
    <property type="expression patterns" value="Not detected"/>
</dbReference>
<dbReference type="neXtProt" id="NX_Q9H209"/>
<dbReference type="OpenTargets" id="ENSG00000170782"/>
<dbReference type="PharmGKB" id="PA31952"/>
<dbReference type="VEuPathDB" id="HostDB:ENSG00000170782"/>
<dbReference type="eggNOG" id="ENOG502QVH7">
    <property type="taxonomic scope" value="Eukaryota"/>
</dbReference>
<dbReference type="GeneTree" id="ENSGT01120000271813"/>
<dbReference type="HOGENOM" id="CLU_012526_1_2_1"/>
<dbReference type="InParanoid" id="Q9H209"/>
<dbReference type="OMA" id="MMWENWT"/>
<dbReference type="OrthoDB" id="9975554at2759"/>
<dbReference type="PAN-GO" id="Q9H209">
    <property type="GO annotations" value="1 GO annotation based on evolutionary models"/>
</dbReference>
<dbReference type="PhylomeDB" id="Q9H209"/>
<dbReference type="TreeFam" id="TF337350"/>
<dbReference type="PathwayCommons" id="Q9H209"/>
<dbReference type="Reactome" id="R-HSA-9752946">
    <property type="pathway name" value="Expression and translocation of olfactory receptors"/>
</dbReference>
<dbReference type="BioGRID-ORCS" id="283297">
    <property type="hits" value="6 hits in 744 CRISPR screens"/>
</dbReference>
<dbReference type="GeneWiki" id="OR10A4"/>
<dbReference type="GenomeRNAi" id="283297"/>
<dbReference type="Pharos" id="Q9H209">
    <property type="development level" value="Tbio"/>
</dbReference>
<dbReference type="PRO" id="PR:Q9H209"/>
<dbReference type="Proteomes" id="UP000005640">
    <property type="component" value="Chromosome 11"/>
</dbReference>
<dbReference type="RNAct" id="Q9H209">
    <property type="molecule type" value="protein"/>
</dbReference>
<dbReference type="Bgee" id="ENSG00000170782">
    <property type="expression patterns" value="Expressed in male germ line stem cell (sensu Vertebrata) in testis and 3 other cell types or tissues"/>
</dbReference>
<dbReference type="GO" id="GO:0005886">
    <property type="term" value="C:plasma membrane"/>
    <property type="evidence" value="ECO:0000318"/>
    <property type="project" value="GO_Central"/>
</dbReference>
<dbReference type="GO" id="GO:0004930">
    <property type="term" value="F:G protein-coupled receptor activity"/>
    <property type="evidence" value="ECO:0007669"/>
    <property type="project" value="UniProtKB-KW"/>
</dbReference>
<dbReference type="GO" id="GO:0004984">
    <property type="term" value="F:olfactory receptor activity"/>
    <property type="evidence" value="ECO:0000318"/>
    <property type="project" value="GO_Central"/>
</dbReference>
<dbReference type="GO" id="GO:0007411">
    <property type="term" value="P:axon guidance"/>
    <property type="evidence" value="ECO:0007669"/>
    <property type="project" value="Ensembl"/>
</dbReference>
<dbReference type="GO" id="GO:0050911">
    <property type="term" value="P:detection of chemical stimulus involved in sensory perception of smell"/>
    <property type="evidence" value="ECO:0000318"/>
    <property type="project" value="GO_Central"/>
</dbReference>
<dbReference type="CDD" id="cd15225">
    <property type="entry name" value="7tmA_OR10A-like"/>
    <property type="match status" value="1"/>
</dbReference>
<dbReference type="FunFam" id="1.20.1070.10:FF:000001">
    <property type="entry name" value="Olfactory receptor"/>
    <property type="match status" value="1"/>
</dbReference>
<dbReference type="Gene3D" id="1.20.1070.10">
    <property type="entry name" value="Rhodopsin 7-helix transmembrane proteins"/>
    <property type="match status" value="1"/>
</dbReference>
<dbReference type="InterPro" id="IPR000276">
    <property type="entry name" value="GPCR_Rhodpsn"/>
</dbReference>
<dbReference type="InterPro" id="IPR017452">
    <property type="entry name" value="GPCR_Rhodpsn_7TM"/>
</dbReference>
<dbReference type="InterPro" id="IPR000725">
    <property type="entry name" value="Olfact_rcpt"/>
</dbReference>
<dbReference type="PANTHER" id="PTHR26453">
    <property type="entry name" value="OLFACTORY RECEPTOR"/>
    <property type="match status" value="1"/>
</dbReference>
<dbReference type="Pfam" id="PF13853">
    <property type="entry name" value="7tm_4"/>
    <property type="match status" value="1"/>
</dbReference>
<dbReference type="PRINTS" id="PR00237">
    <property type="entry name" value="GPCRRHODOPSN"/>
</dbReference>
<dbReference type="PRINTS" id="PR00245">
    <property type="entry name" value="OLFACTORYR"/>
</dbReference>
<dbReference type="SUPFAM" id="SSF81321">
    <property type="entry name" value="Family A G protein-coupled receptor-like"/>
    <property type="match status" value="1"/>
</dbReference>
<dbReference type="PROSITE" id="PS00237">
    <property type="entry name" value="G_PROTEIN_RECEP_F1_1"/>
    <property type="match status" value="1"/>
</dbReference>
<dbReference type="PROSITE" id="PS50262">
    <property type="entry name" value="G_PROTEIN_RECEP_F1_2"/>
    <property type="match status" value="1"/>
</dbReference>
<accession>Q9H209</accession>
<accession>B2RNP5</accession>
<accession>B9EH36</accession>
<accession>Q96R20</accession>
<keyword id="KW-1003">Cell membrane</keyword>
<keyword id="KW-1015">Disulfide bond</keyword>
<keyword id="KW-0297">G-protein coupled receptor</keyword>
<keyword id="KW-0325">Glycoprotein</keyword>
<keyword id="KW-0472">Membrane</keyword>
<keyword id="KW-0552">Olfaction</keyword>
<keyword id="KW-0675">Receptor</keyword>
<keyword id="KW-1185">Reference proteome</keyword>
<keyword id="KW-0716">Sensory transduction</keyword>
<keyword id="KW-0807">Transducer</keyword>
<keyword id="KW-0812">Transmembrane</keyword>
<keyword id="KW-1133">Transmembrane helix</keyword>
<sequence length="315" mass="35117">MMWENWTIVSEFVLVSFSALSTELQALLFLLFLTIYLVTLMGNVLIILVTIADSALQSPMYFFLRNLSFLEIGFNLVIVPKMLGTLIIQDTTISFLGCATQMYFFFFFGAAECCLLATMAYDRYVAICDPLHYPVIMGHISCAQLAAASWFSGFSVATVQTTWIFSFPFCGPNRVNHFFCDSPPVIALVCADTSVFELEALTATVLFILFPFLLILGSYVRILSTIFRMPSAEGKHQAFSTCSAHLLVVSLFYSTAILTYFRPQSSASSESKKLLSLSSTVVTPMLNPIIYSSRNKEVKAALKRLIHRTLGSQKL</sequence>
<reference key="1">
    <citation type="journal article" date="2001" name="Proc. Natl. Acad. Sci. U.S.A.">
        <title>Genomic analysis of orthologous mouse and human olfactory receptor loci.</title>
        <authorList>
            <person name="Lane R.P."/>
            <person name="Cutforth T."/>
            <person name="Young J."/>
            <person name="Athanasiou M."/>
            <person name="Friedman C."/>
            <person name="Rowen L."/>
            <person name="Evans G."/>
            <person name="Axel R."/>
            <person name="Hood L."/>
            <person name="Trask B.J."/>
        </authorList>
    </citation>
    <scope>NUCLEOTIDE SEQUENCE [GENOMIC DNA]</scope>
    <scope>VARIANT PRO-206</scope>
</reference>
<reference key="2">
    <citation type="journal article" date="2001" name="Chem. Senses">
        <title>New GPCRs from a human lingual cDNA library.</title>
        <authorList>
            <person name="Gaudin J.-C."/>
            <person name="Breuils L."/>
            <person name="Haertle T."/>
        </authorList>
    </citation>
    <scope>NUCLEOTIDE SEQUENCE [MRNA]</scope>
    <scope>VARIANT PRO-206</scope>
    <source>
        <tissue>Tongue</tissue>
    </source>
</reference>
<reference key="3">
    <citation type="journal article" date="2006" name="Nature">
        <title>Human chromosome 11 DNA sequence and analysis including novel gene identification.</title>
        <authorList>
            <person name="Taylor T.D."/>
            <person name="Noguchi H."/>
            <person name="Totoki Y."/>
            <person name="Toyoda A."/>
            <person name="Kuroki Y."/>
            <person name="Dewar K."/>
            <person name="Lloyd C."/>
            <person name="Itoh T."/>
            <person name="Takeda T."/>
            <person name="Kim D.-W."/>
            <person name="She X."/>
            <person name="Barlow K.F."/>
            <person name="Bloom T."/>
            <person name="Bruford E."/>
            <person name="Chang J.L."/>
            <person name="Cuomo C.A."/>
            <person name="Eichler E."/>
            <person name="FitzGerald M.G."/>
            <person name="Jaffe D.B."/>
            <person name="LaButti K."/>
            <person name="Nicol R."/>
            <person name="Park H.-S."/>
            <person name="Seaman C."/>
            <person name="Sougnez C."/>
            <person name="Yang X."/>
            <person name="Zimmer A.R."/>
            <person name="Zody M.C."/>
            <person name="Birren B.W."/>
            <person name="Nusbaum C."/>
            <person name="Fujiyama A."/>
            <person name="Hattori M."/>
            <person name="Rogers J."/>
            <person name="Lander E.S."/>
            <person name="Sakaki Y."/>
        </authorList>
    </citation>
    <scope>NUCLEOTIDE SEQUENCE [LARGE SCALE GENOMIC DNA]</scope>
</reference>
<reference key="4">
    <citation type="submission" date="2005-09" db="EMBL/GenBank/DDBJ databases">
        <authorList>
            <person name="Mural R.J."/>
            <person name="Istrail S."/>
            <person name="Sutton G.G."/>
            <person name="Florea L."/>
            <person name="Halpern A.L."/>
            <person name="Mobarry C.M."/>
            <person name="Lippert R."/>
            <person name="Walenz B."/>
            <person name="Shatkay H."/>
            <person name="Dew I."/>
            <person name="Miller J.R."/>
            <person name="Flanigan M.J."/>
            <person name="Edwards N.J."/>
            <person name="Bolanos R."/>
            <person name="Fasulo D."/>
            <person name="Halldorsson B.V."/>
            <person name="Hannenhalli S."/>
            <person name="Turner R."/>
            <person name="Yooseph S."/>
            <person name="Lu F."/>
            <person name="Nusskern D.R."/>
            <person name="Shue B.C."/>
            <person name="Zheng X.H."/>
            <person name="Zhong F."/>
            <person name="Delcher A.L."/>
            <person name="Huson D.H."/>
            <person name="Kravitz S.A."/>
            <person name="Mouchard L."/>
            <person name="Reinert K."/>
            <person name="Remington K.A."/>
            <person name="Clark A.G."/>
            <person name="Waterman M.S."/>
            <person name="Eichler E.E."/>
            <person name="Adams M.D."/>
            <person name="Hunkapiller M.W."/>
            <person name="Myers E.W."/>
            <person name="Venter J.C."/>
        </authorList>
    </citation>
    <scope>NUCLEOTIDE SEQUENCE [LARGE SCALE GENOMIC DNA]</scope>
</reference>
<reference key="5">
    <citation type="journal article" date="2004" name="Genome Res.">
        <title>The status, quality, and expansion of the NIH full-length cDNA project: the Mammalian Gene Collection (MGC).</title>
        <authorList>
            <consortium name="The MGC Project Team"/>
        </authorList>
    </citation>
    <scope>NUCLEOTIDE SEQUENCE [LARGE SCALE MRNA]</scope>
    <scope>VARIANT GLN-262</scope>
    <source>
        <tissue>Testis</tissue>
    </source>
</reference>
<reference key="6">
    <citation type="journal article" date="2002" name="Genomics">
        <title>DEFOG: a practical scheme for deciphering families of genes.</title>
        <authorList>
            <person name="Fuchs T."/>
            <person name="Malecova B."/>
            <person name="Linhart C."/>
            <person name="Sharan R."/>
            <person name="Khen M."/>
            <person name="Herwig R."/>
            <person name="Shmulevich D."/>
            <person name="Elkon R."/>
            <person name="Steinfath M."/>
            <person name="O'Brien J.K."/>
            <person name="Radelof U."/>
            <person name="Lehrach H."/>
            <person name="Lancet D."/>
            <person name="Shamir R."/>
        </authorList>
    </citation>
    <scope>NUCLEOTIDE SEQUENCE [GENOMIC DNA] OF 69-284</scope>
    <scope>VARIANT PRO-206</scope>
</reference>
<organism>
    <name type="scientific">Homo sapiens</name>
    <name type="common">Human</name>
    <dbReference type="NCBI Taxonomy" id="9606"/>
    <lineage>
        <taxon>Eukaryota</taxon>
        <taxon>Metazoa</taxon>
        <taxon>Chordata</taxon>
        <taxon>Craniata</taxon>
        <taxon>Vertebrata</taxon>
        <taxon>Euteleostomi</taxon>
        <taxon>Mammalia</taxon>
        <taxon>Eutheria</taxon>
        <taxon>Euarchontoglires</taxon>
        <taxon>Primates</taxon>
        <taxon>Haplorrhini</taxon>
        <taxon>Catarrhini</taxon>
        <taxon>Hominidae</taxon>
        <taxon>Homo</taxon>
    </lineage>
</organism>
<proteinExistence type="evidence at transcript level"/>
<evidence type="ECO:0000255" key="1"/>
<evidence type="ECO:0000255" key="2">
    <source>
        <dbReference type="PROSITE-ProRule" id="PRU00521"/>
    </source>
</evidence>
<evidence type="ECO:0000269" key="3">
    <source>
    </source>
</evidence>
<evidence type="ECO:0000269" key="4">
    <source>
    </source>
</evidence>
<evidence type="ECO:0000269" key="5">
    <source>
    </source>
</evidence>
<evidence type="ECO:0000269" key="6">
    <source>
    </source>
</evidence>
<evidence type="ECO:0000305" key="7"/>
<protein>
    <recommendedName>
        <fullName>Olfactory receptor 10A4</fullName>
    </recommendedName>
    <alternativeName>
        <fullName>HP2</fullName>
    </alternativeName>
    <alternativeName>
        <fullName>Olfactory receptor-like protein JCG5</fullName>
    </alternativeName>
</protein>
<gene>
    <name type="primary">OR10A4</name>
    <name type="synonym">OR10A4P</name>
</gene>